<proteinExistence type="evidence at transcript level"/>
<evidence type="ECO:0000250" key="1">
    <source>
        <dbReference type="UniProtKB" id="Q40235"/>
    </source>
</evidence>
<evidence type="ECO:0000255" key="2"/>
<evidence type="ECO:0000255" key="3">
    <source>
        <dbReference type="PROSITE-ProRule" id="PRU00498"/>
    </source>
</evidence>
<evidence type="ECO:0000269" key="4">
    <source>
    </source>
</evidence>
<evidence type="ECO:0000269" key="5">
    <source>
    </source>
</evidence>
<evidence type="ECO:0000303" key="6">
    <source>
    </source>
</evidence>
<evidence type="ECO:0000303" key="7">
    <source>
    </source>
</evidence>
<evidence type="ECO:0000305" key="8"/>
<evidence type="ECO:0000312" key="9">
    <source>
        <dbReference type="EMBL" id="CAA05279.1"/>
    </source>
</evidence>
<comment type="function">
    <text evidence="5">At the opposite of its homolog Cf-9 found in S.pimpinellifolium, was not able to confer resistance to the fungal pathogen C.fulvum.</text>
</comment>
<comment type="subcellular location">
    <subcellularLocation>
        <location evidence="8">Cell membrane</location>
        <topology evidence="8">Single-pass type I membrane protein</topology>
    </subcellularLocation>
</comment>
<comment type="induction">
    <text evidence="4">Repressed by sly-miR6023.</text>
</comment>
<comment type="domain">
    <text evidence="1">The extracellular leucine-rich repeats are required for the specificity of the elicitor protein recognition.</text>
</comment>
<comment type="similarity">
    <text evidence="8">Belongs to the RLP family.</text>
</comment>
<reference key="1">
    <citation type="journal article" date="1997" name="Cell">
        <title>Novel disease resistance specificities result from sequence exchange between tandemly repeated genes at the Cf-4/9 locus of tomato.</title>
        <authorList>
            <person name="Parniske M."/>
            <person name="Hammond-Kosack K.E."/>
            <person name="Golstein C."/>
            <person name="Thomas C.M."/>
            <person name="Jones D.A."/>
            <person name="Harrison K."/>
            <person name="Wulff B.B."/>
            <person name="Jones J.D."/>
        </authorList>
    </citation>
    <scope>NUCLEOTIDE SEQUENCE [GENOMIC DNA]</scope>
    <scope>FUNCTION</scope>
    <source>
        <strain>cv. Moneymaker</strain>
    </source>
</reference>
<reference key="2">
    <citation type="journal article" date="2016" name="BMC Plant Biol.">
        <title>Mapping and candidate gene screening of tomato Cladosporium fulvum-resistant gene Cf-19, based on high-throughput sequencing technology.</title>
        <authorList>
            <person name="Zhao T."/>
            <person name="Jiang J."/>
            <person name="Liu G."/>
            <person name="He S."/>
            <person name="Zhang H."/>
            <person name="Chen X."/>
            <person name="Li J."/>
            <person name="Xu X."/>
        </authorList>
    </citation>
    <scope>NUCLEOTIDE SEQUENCE [GENOMIC DNA]</scope>
    <source>
        <strain>cv. Moneymaker</strain>
    </source>
</reference>
<reference key="3">
    <citation type="journal article" date="2012" name="Nature">
        <title>The tomato genome sequence provides insights into fleshy fruit evolution.</title>
        <authorList>
            <consortium name="Tomato Genome Consortium"/>
        </authorList>
    </citation>
    <scope>NUCLEOTIDE SEQUENCE [LARGE SCALE GENOMIC DNA]</scope>
    <source>
        <strain>cv. Heinz 1706</strain>
    </source>
</reference>
<reference key="4">
    <citation type="journal article" date="2012" name="Proc. Natl. Acad. Sci. U.S.A.">
        <title>MicroRNA regulation of plant innate immune receptors.</title>
        <authorList>
            <person name="Li F."/>
            <person name="Pignatta D."/>
            <person name="Bendix C."/>
            <person name="Brunkard J.O."/>
            <person name="Cohn M.M."/>
            <person name="Tung J."/>
            <person name="Sun H."/>
            <person name="Kumar P."/>
            <person name="Baker B."/>
        </authorList>
    </citation>
    <scope>REGULATION BY SLY-MIR6023</scope>
</reference>
<accession>O49879</accession>
<accession>K4ASM1</accession>
<organism>
    <name type="scientific">Solanum lycopersicum</name>
    <name type="common">Tomato</name>
    <name type="synonym">Lycopersicon esculentum</name>
    <dbReference type="NCBI Taxonomy" id="4081"/>
    <lineage>
        <taxon>Eukaryota</taxon>
        <taxon>Viridiplantae</taxon>
        <taxon>Streptophyta</taxon>
        <taxon>Embryophyta</taxon>
        <taxon>Tracheophyta</taxon>
        <taxon>Spermatophyta</taxon>
        <taxon>Magnoliopsida</taxon>
        <taxon>eudicotyledons</taxon>
        <taxon>Gunneridae</taxon>
        <taxon>Pentapetalae</taxon>
        <taxon>asterids</taxon>
        <taxon>lamiids</taxon>
        <taxon>Solanales</taxon>
        <taxon>Solanaceae</taxon>
        <taxon>Solanoideae</taxon>
        <taxon>Solaneae</taxon>
        <taxon>Solanum</taxon>
        <taxon>Solanum subgen. Lycopersicon</taxon>
    </lineage>
</organism>
<feature type="signal peptide" evidence="2">
    <location>
        <begin position="1"/>
        <end position="19"/>
    </location>
</feature>
<feature type="chain" id="PRO_0000442981" description="Receptor-like protein Cf-9 homolog">
    <location>
        <begin position="20"/>
        <end position="845"/>
    </location>
</feature>
<feature type="topological domain" description="Extracellular" evidence="2">
    <location>
        <begin position="20"/>
        <end position="794"/>
    </location>
</feature>
<feature type="transmembrane region" description="Helical" evidence="2">
    <location>
        <begin position="795"/>
        <end position="815"/>
    </location>
</feature>
<feature type="topological domain" description="Cytoplasmic" evidence="2">
    <location>
        <begin position="816"/>
        <end position="845"/>
    </location>
</feature>
<feature type="repeat" description="LRR 1; degenerate" evidence="8">
    <location>
        <begin position="71"/>
        <end position="94"/>
    </location>
</feature>
<feature type="repeat" description="LRR 2" evidence="2">
    <location>
        <begin position="95"/>
        <end position="118"/>
    </location>
</feature>
<feature type="repeat" description="LRR 3" evidence="2">
    <location>
        <begin position="119"/>
        <end position="143"/>
    </location>
</feature>
<feature type="repeat" description="LRR 4" evidence="2">
    <location>
        <begin position="144"/>
        <end position="171"/>
    </location>
</feature>
<feature type="repeat" description="LRR 5" evidence="2">
    <location>
        <begin position="172"/>
        <end position="193"/>
    </location>
</feature>
<feature type="repeat" description="LRR 6" evidence="2">
    <location>
        <begin position="194"/>
        <end position="217"/>
    </location>
</feature>
<feature type="repeat" description="LRR 7" evidence="2">
    <location>
        <begin position="219"/>
        <end position="242"/>
    </location>
</feature>
<feature type="repeat" description="LRR 8" evidence="2">
    <location>
        <begin position="244"/>
        <end position="266"/>
    </location>
</feature>
<feature type="repeat" description="LRR 9" evidence="2">
    <location>
        <begin position="267"/>
        <end position="291"/>
    </location>
</feature>
<feature type="repeat" description="LRR 10" evidence="2">
    <location>
        <begin position="292"/>
        <end position="316"/>
    </location>
</feature>
<feature type="repeat" description="LRR 11" evidence="2">
    <location>
        <begin position="318"/>
        <end position="338"/>
    </location>
</feature>
<feature type="repeat" description="LRR 12" evidence="2">
    <location>
        <begin position="340"/>
        <end position="364"/>
    </location>
</feature>
<feature type="repeat" description="LRR 13" evidence="2">
    <location>
        <begin position="365"/>
        <end position="388"/>
    </location>
</feature>
<feature type="repeat" description="LRR 14" evidence="2">
    <location>
        <begin position="390"/>
        <end position="410"/>
    </location>
</feature>
<feature type="repeat" description="LRR 15" evidence="2">
    <location>
        <begin position="411"/>
        <end position="434"/>
    </location>
</feature>
<feature type="repeat" description="LRR 16" evidence="2">
    <location>
        <begin position="436"/>
        <end position="458"/>
    </location>
</feature>
<feature type="repeat" description="LRR 17" evidence="2">
    <location>
        <begin position="459"/>
        <end position="482"/>
    </location>
</feature>
<feature type="repeat" description="LRR 18" evidence="2">
    <location>
        <begin position="484"/>
        <end position="506"/>
    </location>
</feature>
<feature type="repeat" description="LRR 19" evidence="2">
    <location>
        <begin position="507"/>
        <end position="531"/>
    </location>
</feature>
<feature type="repeat" description="LRR 20" evidence="2">
    <location>
        <begin position="532"/>
        <end position="554"/>
    </location>
</feature>
<feature type="repeat" description="LRR 21" evidence="2">
    <location>
        <begin position="555"/>
        <end position="579"/>
    </location>
</feature>
<feature type="repeat" description="LRR 22" evidence="2">
    <location>
        <begin position="581"/>
        <end position="605"/>
    </location>
</feature>
<feature type="repeat" description="LRR 23" evidence="2">
    <location>
        <begin position="649"/>
        <end position="672"/>
    </location>
</feature>
<feature type="repeat" description="LRR 24" evidence="2">
    <location>
        <begin position="673"/>
        <end position="696"/>
    </location>
</feature>
<feature type="repeat" description="LRR 25" evidence="2">
    <location>
        <begin position="698"/>
        <end position="721"/>
    </location>
</feature>
<feature type="repeat" description="LRR 26" evidence="2">
    <location>
        <begin position="723"/>
        <end position="741"/>
    </location>
</feature>
<feature type="region of interest" description="N-cap" evidence="1">
    <location>
        <begin position="20"/>
        <end position="70"/>
    </location>
</feature>
<feature type="region of interest" description="C-cap/acidic domain" evidence="1">
    <location>
        <begin position="742"/>
        <end position="794"/>
    </location>
</feature>
<feature type="glycosylation site" description="N-linked (GlcNAc...) asparagine" evidence="3">
    <location>
        <position position="28"/>
    </location>
</feature>
<feature type="glycosylation site" description="N-linked (GlcNAc...) asparagine" evidence="3">
    <location>
        <position position="51"/>
    </location>
</feature>
<feature type="glycosylation site" description="N-linked (GlcNAc...) asparagine" evidence="3">
    <location>
        <position position="88"/>
    </location>
</feature>
<feature type="glycosylation site" description="N-linked (GlcNAc...) asparagine" evidence="3">
    <location>
        <position position="131"/>
    </location>
</feature>
<feature type="glycosylation site" description="N-linked (GlcNAc...) asparagine" evidence="3">
    <location>
        <position position="170"/>
    </location>
</feature>
<feature type="glycosylation site" description="N-linked (GlcNAc...) asparagine" evidence="3">
    <location>
        <position position="183"/>
    </location>
</feature>
<feature type="glycosylation site" description="N-linked (GlcNAc...) asparagine" evidence="3">
    <location>
        <position position="191"/>
    </location>
</feature>
<feature type="glycosylation site" description="N-linked (GlcNAc...) asparagine" evidence="3">
    <location>
        <position position="241"/>
    </location>
</feature>
<feature type="glycosylation site" description="N-linked (GlcNAc...) asparagine" evidence="3">
    <location>
        <position position="279"/>
    </location>
</feature>
<feature type="glycosylation site" description="N-linked (GlcNAc...) asparagine" evidence="3">
    <location>
        <position position="290"/>
    </location>
</feature>
<feature type="glycosylation site" description="N-linked (GlcNAc...) asparagine" evidence="3">
    <location>
        <position position="337"/>
    </location>
</feature>
<feature type="glycosylation site" description="N-linked (GlcNAc...) asparagine" evidence="3">
    <location>
        <position position="360"/>
    </location>
</feature>
<feature type="glycosylation site" description="N-linked (GlcNAc...) asparagine" evidence="3">
    <location>
        <position position="378"/>
    </location>
</feature>
<feature type="glycosylation site" description="N-linked (GlcNAc...) asparagine" evidence="3">
    <location>
        <position position="398"/>
    </location>
</feature>
<feature type="glycosylation site" description="N-linked (GlcNAc...) asparagine" evidence="3">
    <location>
        <position position="446"/>
    </location>
</feature>
<feature type="glycosylation site" description="N-linked (GlcNAc...) asparagine" evidence="3">
    <location>
        <position position="501"/>
    </location>
</feature>
<feature type="glycosylation site" description="N-linked (GlcNAc...) asparagine" evidence="3">
    <location>
        <position position="545"/>
    </location>
</feature>
<feature type="glycosylation site" description="N-linked (GlcNAc...) asparagine" evidence="3">
    <location>
        <position position="656"/>
    </location>
</feature>
<feature type="glycosylation site" description="N-linked (GlcNAc...) asparagine" evidence="3">
    <location>
        <position position="680"/>
    </location>
</feature>
<feature type="glycosylation site" description="N-linked (GlcNAc...) asparagine" evidence="3">
    <location>
        <position position="696"/>
    </location>
</feature>
<feature type="glycosylation site" description="N-linked (GlcNAc...) asparagine" evidence="3">
    <location>
        <position position="728"/>
    </location>
</feature>
<feature type="glycosylation site" description="N-linked (GlcNAc...) asparagine" evidence="3">
    <location>
        <position position="749"/>
    </location>
</feature>
<feature type="sequence conflict" description="In Ref. 1; CAA05279 and 2; AMN14931." evidence="8" ref="1 2">
    <original>L</original>
    <variation>P</variation>
    <location>
        <position position="11"/>
    </location>
</feature>
<gene>
    <name evidence="9" type="primary">HCR9-0</name>
    <name evidence="6 7" type="synonym">CF-0</name>
    <name evidence="8" type="ordered locus">Solyc01g006550.2.1</name>
</gene>
<dbReference type="EMBL" id="AJ002237">
    <property type="protein sequence ID" value="CAA05279.1"/>
    <property type="molecule type" value="Genomic_DNA"/>
</dbReference>
<dbReference type="EMBL" id="KT874513">
    <property type="protein sequence ID" value="AMN14931.1"/>
    <property type="molecule type" value="Genomic_DNA"/>
</dbReference>
<dbReference type="EMBL" id="CM001064">
    <property type="status" value="NOT_ANNOTATED_CDS"/>
    <property type="molecule type" value="Genomic_DNA"/>
</dbReference>
<dbReference type="PIR" id="T07039">
    <property type="entry name" value="T07039"/>
</dbReference>
<dbReference type="RefSeq" id="XP_004228623.1">
    <property type="nucleotide sequence ID" value="XM_004228575.3"/>
</dbReference>
<dbReference type="RefSeq" id="XP_019069253.1">
    <property type="nucleotide sequence ID" value="XM_019213708.1"/>
</dbReference>
<dbReference type="SMR" id="O49879"/>
<dbReference type="FunCoup" id="O49879">
    <property type="interactions" value="526"/>
</dbReference>
<dbReference type="STRING" id="4081.O49879"/>
<dbReference type="GlyCosmos" id="O49879">
    <property type="glycosylation" value="22 sites, No reported glycans"/>
</dbReference>
<dbReference type="PaxDb" id="4081-Solyc01g006550.2.1"/>
<dbReference type="eggNOG" id="KOG0619">
    <property type="taxonomic scope" value="Eukaryota"/>
</dbReference>
<dbReference type="InParanoid" id="O49879"/>
<dbReference type="OrthoDB" id="676979at2759"/>
<dbReference type="Proteomes" id="UP000004994">
    <property type="component" value="Unplaced"/>
</dbReference>
<dbReference type="ExpressionAtlas" id="O49879">
    <property type="expression patterns" value="baseline and differential"/>
</dbReference>
<dbReference type="GO" id="GO:0005886">
    <property type="term" value="C:plasma membrane"/>
    <property type="evidence" value="ECO:0007669"/>
    <property type="project" value="UniProtKB-SubCell"/>
</dbReference>
<dbReference type="FunFam" id="3.80.10.10:FF:000111">
    <property type="entry name" value="LRR receptor-like serine/threonine-protein kinase ERECTA"/>
    <property type="match status" value="1"/>
</dbReference>
<dbReference type="FunFam" id="3.80.10.10:FF:000095">
    <property type="entry name" value="LRR receptor-like serine/threonine-protein kinase GSO1"/>
    <property type="match status" value="1"/>
</dbReference>
<dbReference type="FunFam" id="3.80.10.10:FF:000713">
    <property type="entry name" value="Receptor-like protein 48"/>
    <property type="match status" value="1"/>
</dbReference>
<dbReference type="FunFam" id="3.80.10.10:FF:001082">
    <property type="entry name" value="Receptor-like protein Cf-9"/>
    <property type="match status" value="1"/>
</dbReference>
<dbReference type="Gene3D" id="3.80.10.10">
    <property type="entry name" value="Ribonuclease Inhibitor"/>
    <property type="match status" value="3"/>
</dbReference>
<dbReference type="InterPro" id="IPR001611">
    <property type="entry name" value="Leu-rich_rpt"/>
</dbReference>
<dbReference type="InterPro" id="IPR003591">
    <property type="entry name" value="Leu-rich_rpt_typical-subtyp"/>
</dbReference>
<dbReference type="InterPro" id="IPR032675">
    <property type="entry name" value="LRR_dom_sf"/>
</dbReference>
<dbReference type="InterPro" id="IPR013210">
    <property type="entry name" value="LRR_N_plant-typ"/>
</dbReference>
<dbReference type="InterPro" id="IPR046956">
    <property type="entry name" value="RLP23-like"/>
</dbReference>
<dbReference type="PANTHER" id="PTHR48061">
    <property type="entry name" value="LEUCINE-RICH REPEAT RECEPTOR PROTEIN KINASE EMS1-LIKE-RELATED"/>
    <property type="match status" value="1"/>
</dbReference>
<dbReference type="PANTHER" id="PTHR48061:SF10">
    <property type="entry name" value="LEUCINE-RICH REPEAT-CONTAINING N-TERMINAL PLANT-TYPE DOMAIN-CONTAINING PROTEIN"/>
    <property type="match status" value="1"/>
</dbReference>
<dbReference type="Pfam" id="PF00560">
    <property type="entry name" value="LRR_1"/>
    <property type="match status" value="5"/>
</dbReference>
<dbReference type="Pfam" id="PF13516">
    <property type="entry name" value="LRR_6"/>
    <property type="match status" value="1"/>
</dbReference>
<dbReference type="Pfam" id="PF13855">
    <property type="entry name" value="LRR_8"/>
    <property type="match status" value="2"/>
</dbReference>
<dbReference type="Pfam" id="PF08263">
    <property type="entry name" value="LRRNT_2"/>
    <property type="match status" value="1"/>
</dbReference>
<dbReference type="PRINTS" id="PR00019">
    <property type="entry name" value="LEURICHRPT"/>
</dbReference>
<dbReference type="SMART" id="SM00369">
    <property type="entry name" value="LRR_TYP"/>
    <property type="match status" value="8"/>
</dbReference>
<dbReference type="SUPFAM" id="SSF52058">
    <property type="entry name" value="L domain-like"/>
    <property type="match status" value="2"/>
</dbReference>
<keyword id="KW-1003">Cell membrane</keyword>
<keyword id="KW-0325">Glycoprotein</keyword>
<keyword id="KW-0433">Leucine-rich repeat</keyword>
<keyword id="KW-0472">Membrane</keyword>
<keyword id="KW-1185">Reference proteome</keyword>
<keyword id="KW-0677">Repeat</keyword>
<keyword id="KW-0732">Signal</keyword>
<keyword id="KW-0812">Transmembrane</keyword>
<keyword id="KW-1133">Transmembrane helix</keyword>
<sequence>MGCVKLVFFMLLKLDLLEFKNMFTVNPNASDYCYDYTDQRMQSYPRTLFWNKSTDCCSWDGIHCDETTGQVVELDLRCSQLQGKFHSNSSLFQLSNLKRLDLSFNDFTGSLISPKFGEFSDLTHLDLSDSNFTGVIPSEISHLSKLHVLRIHDLNELSLGPHNFELLLKNLTQLRELNLDSVNISSTIPSNFSSHLTNLWLPYTELRGVLPERVFHLSDLEFLHLSYNPQLTVRFPTTKWNSSASLMKLYVHSVNIADRIPESFSHLTSLHALYMGRCNLSGHIPKPLWNLTNIESLFLGDNHLEGPIPQLTRFEKLKRLSLGNNNLHGGLEFLSFNRSWTQLEILYFSSNYLTGPIPSNVSGLQNLGWLFLSSNHLNGSIPSWIFSLPSLVVLDLSNNTFSGKIQEFKSKTLSTVTLKQNQLEGPIPNSLLNQESLQFLLLSHNNISGYISSSICNLKTLMVLDLGSNNLEGTIPQCVGERNEYLLDLDLSNNRLSGTINTTFSIGNSFKAISLHGNKLTGKVPRSLINCKYLKLLDLGNNQLNDTFPNWLGYLSQLKILSLRSNKLHGPIKSSGSTNLFMRLQILDLSSNGFSGNLPERILGNLQTMKKIDENTRFPEYISDQYEIYYVYLTTITTKGQDYDSVRILDSNMIINLSKNRFEGHIPSIIGDLVGLRTLNLSRNALEGHIPASFQNLSVLESLDLSSNRISGEIPQQLASLTFLEVLNLSHNHLVGCIPKGKQFDSFGNTSYQGNDGLRGFPLSKLCGVDDQVTTPAELDQEEEEEDSPMISWQGVLVGYGCGLVIGLSVIYIMWSTQYPAWFSRMDLKLEHIITTRMKKHKKRY</sequence>
<name>CF0_SOLLC</name>
<protein>
    <recommendedName>
        <fullName evidence="8">Receptor-like protein Cf-9 homolog</fullName>
    </recommendedName>
</protein>